<feature type="chain" id="PRO_1000135064" description="Imidazole glycerol phosphate synthase subunit HisF">
    <location>
        <begin position="1"/>
        <end position="258"/>
    </location>
</feature>
<feature type="active site" evidence="1">
    <location>
        <position position="11"/>
    </location>
</feature>
<feature type="active site" evidence="1">
    <location>
        <position position="130"/>
    </location>
</feature>
<proteinExistence type="inferred from homology"/>
<sequence>MLAKRIIPCLDVKDGQVVKGVQFRNHEIIGDIVPLAQRYAQEGADELVFYDITASSDGRVVDKSWVARVAEVIDIPFCVAGGIKSVEDASQILTFGADKISINSPALADPTLITRLADRYGVQCIVVGIDTWYDTESDSYQVYQFTGDEKRTKATTWQTEDWVKEIQLRGAGEIVLNMMNQDGVRNGYDLRQLQQMRAICHVPLIASGGAGTPDHFLEAFRDADVDGALAASVFHKQIINIGELKKYLSEQGVEIRVC</sequence>
<organism>
    <name type="scientific">Yersinia pseudotuberculosis serotype O:3 (strain YPIII)</name>
    <dbReference type="NCBI Taxonomy" id="502800"/>
    <lineage>
        <taxon>Bacteria</taxon>
        <taxon>Pseudomonadati</taxon>
        <taxon>Pseudomonadota</taxon>
        <taxon>Gammaproteobacteria</taxon>
        <taxon>Enterobacterales</taxon>
        <taxon>Yersiniaceae</taxon>
        <taxon>Yersinia</taxon>
    </lineage>
</organism>
<dbReference type="EC" id="4.3.2.10" evidence="1"/>
<dbReference type="EMBL" id="CP000950">
    <property type="protein sequence ID" value="ACA68808.1"/>
    <property type="molecule type" value="Genomic_DNA"/>
</dbReference>
<dbReference type="RefSeq" id="WP_012304246.1">
    <property type="nucleotide sequence ID" value="NZ_CP009792.1"/>
</dbReference>
<dbReference type="SMR" id="B1JPW5"/>
<dbReference type="KEGG" id="ypy:YPK_2531"/>
<dbReference type="PATRIC" id="fig|502800.11.peg.3228"/>
<dbReference type="UniPathway" id="UPA00031">
    <property type="reaction ID" value="UER00010"/>
</dbReference>
<dbReference type="GO" id="GO:0005737">
    <property type="term" value="C:cytoplasm"/>
    <property type="evidence" value="ECO:0007669"/>
    <property type="project" value="UniProtKB-SubCell"/>
</dbReference>
<dbReference type="GO" id="GO:0000107">
    <property type="term" value="F:imidazoleglycerol-phosphate synthase activity"/>
    <property type="evidence" value="ECO:0007669"/>
    <property type="project" value="UniProtKB-UniRule"/>
</dbReference>
<dbReference type="GO" id="GO:0016829">
    <property type="term" value="F:lyase activity"/>
    <property type="evidence" value="ECO:0007669"/>
    <property type="project" value="UniProtKB-KW"/>
</dbReference>
<dbReference type="GO" id="GO:0000105">
    <property type="term" value="P:L-histidine biosynthetic process"/>
    <property type="evidence" value="ECO:0007669"/>
    <property type="project" value="UniProtKB-UniRule"/>
</dbReference>
<dbReference type="CDD" id="cd04731">
    <property type="entry name" value="HisF"/>
    <property type="match status" value="1"/>
</dbReference>
<dbReference type="FunFam" id="3.20.20.70:FF:000006">
    <property type="entry name" value="Imidazole glycerol phosphate synthase subunit HisF"/>
    <property type="match status" value="1"/>
</dbReference>
<dbReference type="Gene3D" id="3.20.20.70">
    <property type="entry name" value="Aldolase class I"/>
    <property type="match status" value="1"/>
</dbReference>
<dbReference type="HAMAP" id="MF_01013">
    <property type="entry name" value="HisF"/>
    <property type="match status" value="1"/>
</dbReference>
<dbReference type="InterPro" id="IPR013785">
    <property type="entry name" value="Aldolase_TIM"/>
</dbReference>
<dbReference type="InterPro" id="IPR006062">
    <property type="entry name" value="His_biosynth"/>
</dbReference>
<dbReference type="InterPro" id="IPR004651">
    <property type="entry name" value="HisF"/>
</dbReference>
<dbReference type="InterPro" id="IPR050064">
    <property type="entry name" value="IGPS_HisA/HisF"/>
</dbReference>
<dbReference type="InterPro" id="IPR011060">
    <property type="entry name" value="RibuloseP-bd_barrel"/>
</dbReference>
<dbReference type="NCBIfam" id="TIGR00735">
    <property type="entry name" value="hisF"/>
    <property type="match status" value="1"/>
</dbReference>
<dbReference type="PANTHER" id="PTHR21235:SF2">
    <property type="entry name" value="IMIDAZOLE GLYCEROL PHOSPHATE SYNTHASE HISHF"/>
    <property type="match status" value="1"/>
</dbReference>
<dbReference type="PANTHER" id="PTHR21235">
    <property type="entry name" value="IMIDAZOLE GLYCEROL PHOSPHATE SYNTHASE SUBUNIT HISF/H IGP SYNTHASE SUBUNIT HISF/H"/>
    <property type="match status" value="1"/>
</dbReference>
<dbReference type="Pfam" id="PF00977">
    <property type="entry name" value="His_biosynth"/>
    <property type="match status" value="1"/>
</dbReference>
<dbReference type="SUPFAM" id="SSF51366">
    <property type="entry name" value="Ribulose-phoshate binding barrel"/>
    <property type="match status" value="1"/>
</dbReference>
<keyword id="KW-0028">Amino-acid biosynthesis</keyword>
<keyword id="KW-0963">Cytoplasm</keyword>
<keyword id="KW-0368">Histidine biosynthesis</keyword>
<keyword id="KW-0456">Lyase</keyword>
<protein>
    <recommendedName>
        <fullName evidence="1">Imidazole glycerol phosphate synthase subunit HisF</fullName>
        <ecNumber evidence="1">4.3.2.10</ecNumber>
    </recommendedName>
    <alternativeName>
        <fullName evidence="1">IGP synthase cyclase subunit</fullName>
    </alternativeName>
    <alternativeName>
        <fullName evidence="1">IGP synthase subunit HisF</fullName>
    </alternativeName>
    <alternativeName>
        <fullName evidence="1">ImGP synthase subunit HisF</fullName>
        <shortName evidence="1">IGPS subunit HisF</shortName>
    </alternativeName>
</protein>
<reference key="1">
    <citation type="submission" date="2008-02" db="EMBL/GenBank/DDBJ databases">
        <title>Complete sequence of Yersinia pseudotuberculosis YPIII.</title>
        <authorList>
            <consortium name="US DOE Joint Genome Institute"/>
            <person name="Copeland A."/>
            <person name="Lucas S."/>
            <person name="Lapidus A."/>
            <person name="Glavina del Rio T."/>
            <person name="Dalin E."/>
            <person name="Tice H."/>
            <person name="Bruce D."/>
            <person name="Goodwin L."/>
            <person name="Pitluck S."/>
            <person name="Munk A.C."/>
            <person name="Brettin T."/>
            <person name="Detter J.C."/>
            <person name="Han C."/>
            <person name="Tapia R."/>
            <person name="Schmutz J."/>
            <person name="Larimer F."/>
            <person name="Land M."/>
            <person name="Hauser L."/>
            <person name="Challacombe J.F."/>
            <person name="Green L."/>
            <person name="Lindler L.E."/>
            <person name="Nikolich M.P."/>
            <person name="Richardson P."/>
        </authorList>
    </citation>
    <scope>NUCLEOTIDE SEQUENCE [LARGE SCALE GENOMIC DNA]</scope>
    <source>
        <strain>YPIII</strain>
    </source>
</reference>
<evidence type="ECO:0000255" key="1">
    <source>
        <dbReference type="HAMAP-Rule" id="MF_01013"/>
    </source>
</evidence>
<comment type="function">
    <text evidence="1">IGPS catalyzes the conversion of PRFAR and glutamine to IGP, AICAR and glutamate. The HisF subunit catalyzes the cyclization activity that produces IGP and AICAR from PRFAR using the ammonia provided by the HisH subunit.</text>
</comment>
<comment type="catalytic activity">
    <reaction evidence="1">
        <text>5-[(5-phospho-1-deoxy-D-ribulos-1-ylimino)methylamino]-1-(5-phospho-beta-D-ribosyl)imidazole-4-carboxamide + L-glutamine = D-erythro-1-(imidazol-4-yl)glycerol 3-phosphate + 5-amino-1-(5-phospho-beta-D-ribosyl)imidazole-4-carboxamide + L-glutamate + H(+)</text>
        <dbReference type="Rhea" id="RHEA:24793"/>
        <dbReference type="ChEBI" id="CHEBI:15378"/>
        <dbReference type="ChEBI" id="CHEBI:29985"/>
        <dbReference type="ChEBI" id="CHEBI:58278"/>
        <dbReference type="ChEBI" id="CHEBI:58359"/>
        <dbReference type="ChEBI" id="CHEBI:58475"/>
        <dbReference type="ChEBI" id="CHEBI:58525"/>
        <dbReference type="EC" id="4.3.2.10"/>
    </reaction>
</comment>
<comment type="pathway">
    <text evidence="1">Amino-acid biosynthesis; L-histidine biosynthesis; L-histidine from 5-phospho-alpha-D-ribose 1-diphosphate: step 5/9.</text>
</comment>
<comment type="subunit">
    <text evidence="1">Heterodimer of HisH and HisF.</text>
</comment>
<comment type="subcellular location">
    <subcellularLocation>
        <location evidence="1">Cytoplasm</location>
    </subcellularLocation>
</comment>
<comment type="similarity">
    <text evidence="1">Belongs to the HisA/HisF family.</text>
</comment>
<name>HIS6_YERPY</name>
<gene>
    <name evidence="1" type="primary">hisF</name>
    <name type="ordered locus">YPK_2531</name>
</gene>
<accession>B1JPW5</accession>